<reference key="1">
    <citation type="journal article" date="2007" name="BMC Microbiol.">
        <title>Subtle genetic changes enhance virulence of methicillin resistant and sensitive Staphylococcus aureus.</title>
        <authorList>
            <person name="Highlander S.K."/>
            <person name="Hulten K.G."/>
            <person name="Qin X."/>
            <person name="Jiang H."/>
            <person name="Yerrapragada S."/>
            <person name="Mason E.O. Jr."/>
            <person name="Shang Y."/>
            <person name="Williams T.M."/>
            <person name="Fortunov R.M."/>
            <person name="Liu Y."/>
            <person name="Igboeli O."/>
            <person name="Petrosino J."/>
            <person name="Tirumalai M."/>
            <person name="Uzman A."/>
            <person name="Fox G.E."/>
            <person name="Cardenas A.M."/>
            <person name="Muzny D.M."/>
            <person name="Hemphill L."/>
            <person name="Ding Y."/>
            <person name="Dugan S."/>
            <person name="Blyth P.R."/>
            <person name="Buhay C.J."/>
            <person name="Dinh H.H."/>
            <person name="Hawes A.C."/>
            <person name="Holder M."/>
            <person name="Kovar C.L."/>
            <person name="Lee S.L."/>
            <person name="Liu W."/>
            <person name="Nazareth L.V."/>
            <person name="Wang Q."/>
            <person name="Zhou J."/>
            <person name="Kaplan S.L."/>
            <person name="Weinstock G.M."/>
        </authorList>
    </citation>
    <scope>NUCLEOTIDE SEQUENCE [LARGE SCALE GENOMIC DNA]</scope>
    <source>
        <strain>USA300 / TCH1516</strain>
    </source>
</reference>
<keyword id="KW-0143">Chaperone</keyword>
<keyword id="KW-0963">Cytoplasm</keyword>
<keyword id="KW-1015">Disulfide bond</keyword>
<keyword id="KW-0676">Redox-active center</keyword>
<keyword id="KW-0346">Stress response</keyword>
<keyword id="KW-0862">Zinc</keyword>
<feature type="chain" id="PRO_1000076089" description="33 kDa chaperonin">
    <location>
        <begin position="1"/>
        <end position="293"/>
    </location>
</feature>
<feature type="disulfide bond" description="Redox-active" evidence="1">
    <location>
        <begin position="238"/>
        <end position="240"/>
    </location>
</feature>
<feature type="disulfide bond" description="Redox-active" evidence="1">
    <location>
        <begin position="271"/>
        <end position="274"/>
    </location>
</feature>
<gene>
    <name evidence="1" type="primary">hslO</name>
    <name type="ordered locus">USA300HOU_0506</name>
</gene>
<accession>A8YZL0</accession>
<comment type="function">
    <text evidence="1">Redox regulated molecular chaperone. Protects both thermally unfolding and oxidatively damaged proteins from irreversible aggregation. Plays an important role in the bacterial defense system toward oxidative stress.</text>
</comment>
<comment type="subcellular location">
    <subcellularLocation>
        <location evidence="1">Cytoplasm</location>
    </subcellularLocation>
</comment>
<comment type="PTM">
    <text evidence="1">Under oxidizing conditions two disulfide bonds are formed involving the reactive cysteines. Under reducing conditions zinc is bound to the reactive cysteines and the protein is inactive.</text>
</comment>
<comment type="similarity">
    <text evidence="1">Belongs to the HSP33 family.</text>
</comment>
<organism>
    <name type="scientific">Staphylococcus aureus (strain USA300 / TCH1516)</name>
    <dbReference type="NCBI Taxonomy" id="451516"/>
    <lineage>
        <taxon>Bacteria</taxon>
        <taxon>Bacillati</taxon>
        <taxon>Bacillota</taxon>
        <taxon>Bacilli</taxon>
        <taxon>Bacillales</taxon>
        <taxon>Staphylococcaceae</taxon>
        <taxon>Staphylococcus</taxon>
    </lineage>
</organism>
<evidence type="ECO:0000255" key="1">
    <source>
        <dbReference type="HAMAP-Rule" id="MF_00117"/>
    </source>
</evidence>
<protein>
    <recommendedName>
        <fullName evidence="1">33 kDa chaperonin</fullName>
    </recommendedName>
    <alternativeName>
        <fullName evidence="1">Heat shock protein 33 homolog</fullName>
        <shortName evidence="1">HSP33</shortName>
    </alternativeName>
</protein>
<dbReference type="EMBL" id="CP000730">
    <property type="protein sequence ID" value="ABX28532.1"/>
    <property type="molecule type" value="Genomic_DNA"/>
</dbReference>
<dbReference type="RefSeq" id="WP_000148605.1">
    <property type="nucleotide sequence ID" value="NC_010079.1"/>
</dbReference>
<dbReference type="SMR" id="A8YZL0"/>
<dbReference type="KEGG" id="sax:USA300HOU_0506"/>
<dbReference type="HOGENOM" id="CLU_054493_1_0_9"/>
<dbReference type="GO" id="GO:0005737">
    <property type="term" value="C:cytoplasm"/>
    <property type="evidence" value="ECO:0007669"/>
    <property type="project" value="UniProtKB-SubCell"/>
</dbReference>
<dbReference type="GO" id="GO:0044183">
    <property type="term" value="F:protein folding chaperone"/>
    <property type="evidence" value="ECO:0007669"/>
    <property type="project" value="TreeGrafter"/>
</dbReference>
<dbReference type="GO" id="GO:0051082">
    <property type="term" value="F:unfolded protein binding"/>
    <property type="evidence" value="ECO:0007669"/>
    <property type="project" value="UniProtKB-UniRule"/>
</dbReference>
<dbReference type="GO" id="GO:0042026">
    <property type="term" value="P:protein refolding"/>
    <property type="evidence" value="ECO:0007669"/>
    <property type="project" value="TreeGrafter"/>
</dbReference>
<dbReference type="CDD" id="cd00498">
    <property type="entry name" value="Hsp33"/>
    <property type="match status" value="1"/>
</dbReference>
<dbReference type="Gene3D" id="3.55.30.10">
    <property type="entry name" value="Hsp33 domain"/>
    <property type="match status" value="1"/>
</dbReference>
<dbReference type="Gene3D" id="3.90.1280.10">
    <property type="entry name" value="HSP33 redox switch-like"/>
    <property type="match status" value="1"/>
</dbReference>
<dbReference type="HAMAP" id="MF_00117">
    <property type="entry name" value="HslO"/>
    <property type="match status" value="1"/>
</dbReference>
<dbReference type="InterPro" id="IPR000397">
    <property type="entry name" value="Heat_shock_Hsp33"/>
</dbReference>
<dbReference type="InterPro" id="IPR016154">
    <property type="entry name" value="Heat_shock_Hsp33_C"/>
</dbReference>
<dbReference type="InterPro" id="IPR016153">
    <property type="entry name" value="Heat_shock_Hsp33_N"/>
</dbReference>
<dbReference type="NCBIfam" id="NF001033">
    <property type="entry name" value="PRK00114.1"/>
    <property type="match status" value="1"/>
</dbReference>
<dbReference type="PANTHER" id="PTHR30111">
    <property type="entry name" value="33 KDA CHAPERONIN"/>
    <property type="match status" value="1"/>
</dbReference>
<dbReference type="PANTHER" id="PTHR30111:SF1">
    <property type="entry name" value="33 KDA CHAPERONIN"/>
    <property type="match status" value="1"/>
</dbReference>
<dbReference type="Pfam" id="PF01430">
    <property type="entry name" value="HSP33"/>
    <property type="match status" value="1"/>
</dbReference>
<dbReference type="PIRSF" id="PIRSF005261">
    <property type="entry name" value="Heat_shock_Hsp33"/>
    <property type="match status" value="1"/>
</dbReference>
<dbReference type="SUPFAM" id="SSF64397">
    <property type="entry name" value="Hsp33 domain"/>
    <property type="match status" value="1"/>
</dbReference>
<dbReference type="SUPFAM" id="SSF118352">
    <property type="entry name" value="HSP33 redox switch-like"/>
    <property type="match status" value="1"/>
</dbReference>
<name>HSLO_STAAT</name>
<sequence length="293" mass="31822">MTHDYIVKALAFDGEIRAYAALTTETVQEAQTRHYTWPTASAAMGRTMTATAMMGAMLKGDQKLTVTVDGQGPIGRIIADANAKGEVRAYVDHPQTHFPLNEQGKLDVRRAVGTNGSIMVVKDVGMKDYFSGASPIVSGELGEDFTYYYATSEQTPSSVGLGVLVNPDNTIKAAGGFIIQVMPGAKDETISKLEKAISEMTPVSKLIEQGLTPEGLLNEILGEDHVQILEKMPVQFECNCSHEKFLNAIKGLGEAEIQNMIKEDHGAEAVCHFCGNKYKYTEEELNVLLESLA</sequence>
<proteinExistence type="inferred from homology"/>